<sequence>MKLSFTKMHGAGNDFVVLDGYTRALPPLTGAQVRALADRHFGIGADQLLLVEKPTVDGADFKYRIFNCDGGEVEHCGNGARCFVKFVRDHGLTGKASVRVEVKHGVITLTMQDNGEVVVDMGAPVFEPARVPFDASGLDGRREGADTLWPLPVNGVTRWISVVSMGNPHAVQIVDDAEAFAVRVDGPAIERDPRFPQRVNAGFMQIVSRHEVNLRVYERGAGETLACGTGACAAVAAGIRRGRLDSPVTVHTHGGTLTISWNGACDERAPLMMAGPATTVFEGVIELPA</sequence>
<keyword id="KW-0028">Amino-acid biosynthesis</keyword>
<keyword id="KW-0963">Cytoplasm</keyword>
<keyword id="KW-0413">Isomerase</keyword>
<keyword id="KW-0457">Lysine biosynthesis</keyword>
<keyword id="KW-1185">Reference proteome</keyword>
<organism>
    <name type="scientific">Burkholderia mallei (strain ATCC 23344)</name>
    <dbReference type="NCBI Taxonomy" id="243160"/>
    <lineage>
        <taxon>Bacteria</taxon>
        <taxon>Pseudomonadati</taxon>
        <taxon>Pseudomonadota</taxon>
        <taxon>Betaproteobacteria</taxon>
        <taxon>Burkholderiales</taxon>
        <taxon>Burkholderiaceae</taxon>
        <taxon>Burkholderia</taxon>
        <taxon>pseudomallei group</taxon>
    </lineage>
</organism>
<reference key="1">
    <citation type="journal article" date="2004" name="Proc. Natl. Acad. Sci. U.S.A.">
        <title>Structural flexibility in the Burkholderia mallei genome.</title>
        <authorList>
            <person name="Nierman W.C."/>
            <person name="DeShazer D."/>
            <person name="Kim H.S."/>
            <person name="Tettelin H."/>
            <person name="Nelson K.E."/>
            <person name="Feldblyum T.V."/>
            <person name="Ulrich R.L."/>
            <person name="Ronning C.M."/>
            <person name="Brinkac L.M."/>
            <person name="Daugherty S.C."/>
            <person name="Davidsen T.D."/>
            <person name="DeBoy R.T."/>
            <person name="Dimitrov G."/>
            <person name="Dodson R.J."/>
            <person name="Durkin A.S."/>
            <person name="Gwinn M.L."/>
            <person name="Haft D.H."/>
            <person name="Khouri H.M."/>
            <person name="Kolonay J.F."/>
            <person name="Madupu R."/>
            <person name="Mohammoud Y."/>
            <person name="Nelson W.C."/>
            <person name="Radune D."/>
            <person name="Romero C.M."/>
            <person name="Sarria S."/>
            <person name="Selengut J."/>
            <person name="Shamblin C."/>
            <person name="Sullivan S.A."/>
            <person name="White O."/>
            <person name="Yu Y."/>
            <person name="Zafar N."/>
            <person name="Zhou L."/>
            <person name="Fraser C.M."/>
        </authorList>
    </citation>
    <scope>NUCLEOTIDE SEQUENCE [LARGE SCALE GENOMIC DNA]</scope>
    <source>
        <strain>ATCC 23344</strain>
    </source>
</reference>
<feature type="chain" id="PRO_1000011856" description="Diaminopimelate epimerase">
    <location>
        <begin position="1"/>
        <end position="289"/>
    </location>
</feature>
<feature type="active site" description="Proton donor" evidence="1">
    <location>
        <position position="76"/>
    </location>
</feature>
<feature type="active site" description="Proton acceptor" evidence="1">
    <location>
        <position position="227"/>
    </location>
</feature>
<feature type="binding site" evidence="1">
    <location>
        <position position="13"/>
    </location>
    <ligand>
        <name>substrate</name>
    </ligand>
</feature>
<feature type="binding site" evidence="1">
    <location>
        <position position="47"/>
    </location>
    <ligand>
        <name>substrate</name>
    </ligand>
</feature>
<feature type="binding site" evidence="1">
    <location>
        <position position="67"/>
    </location>
    <ligand>
        <name>substrate</name>
    </ligand>
</feature>
<feature type="binding site" evidence="1">
    <location>
        <begin position="77"/>
        <end position="78"/>
    </location>
    <ligand>
        <name>substrate</name>
    </ligand>
</feature>
<feature type="binding site" evidence="1">
    <location>
        <position position="167"/>
    </location>
    <ligand>
        <name>substrate</name>
    </ligand>
</feature>
<feature type="binding site" evidence="1">
    <location>
        <position position="200"/>
    </location>
    <ligand>
        <name>substrate</name>
    </ligand>
</feature>
<feature type="binding site" evidence="1">
    <location>
        <begin position="218"/>
        <end position="219"/>
    </location>
    <ligand>
        <name>substrate</name>
    </ligand>
</feature>
<feature type="binding site" evidence="1">
    <location>
        <begin position="228"/>
        <end position="229"/>
    </location>
    <ligand>
        <name>substrate</name>
    </ligand>
</feature>
<feature type="site" description="Could be important to modulate the pK values of the two catalytic cysteine residues" evidence="1">
    <location>
        <position position="169"/>
    </location>
</feature>
<feature type="site" description="Could be important to modulate the pK values of the two catalytic cysteine residues" evidence="1">
    <location>
        <position position="218"/>
    </location>
</feature>
<protein>
    <recommendedName>
        <fullName evidence="1">Diaminopimelate epimerase</fullName>
        <shortName evidence="1">DAP epimerase</shortName>
        <ecNumber evidence="1">5.1.1.7</ecNumber>
    </recommendedName>
    <alternativeName>
        <fullName evidence="1">PLP-independent amino acid racemase</fullName>
    </alternativeName>
</protein>
<gene>
    <name evidence="1" type="primary">dapF</name>
    <name type="ordered locus">BMA3260</name>
</gene>
<name>DAPF_BURMA</name>
<comment type="function">
    <text evidence="1">Catalyzes the stereoinversion of LL-2,6-diaminopimelate (L,L-DAP) to meso-diaminopimelate (meso-DAP), a precursor of L-lysine and an essential component of the bacterial peptidoglycan.</text>
</comment>
<comment type="catalytic activity">
    <reaction evidence="1">
        <text>(2S,6S)-2,6-diaminopimelate = meso-2,6-diaminopimelate</text>
        <dbReference type="Rhea" id="RHEA:15393"/>
        <dbReference type="ChEBI" id="CHEBI:57609"/>
        <dbReference type="ChEBI" id="CHEBI:57791"/>
        <dbReference type="EC" id="5.1.1.7"/>
    </reaction>
</comment>
<comment type="pathway">
    <text evidence="1">Amino-acid biosynthesis; L-lysine biosynthesis via DAP pathway; DL-2,6-diaminopimelate from LL-2,6-diaminopimelate: step 1/1.</text>
</comment>
<comment type="subunit">
    <text evidence="1">Homodimer.</text>
</comment>
<comment type="subcellular location">
    <subcellularLocation>
        <location evidence="1">Cytoplasm</location>
    </subcellularLocation>
</comment>
<comment type="similarity">
    <text evidence="1">Belongs to the diaminopimelate epimerase family.</text>
</comment>
<proteinExistence type="inferred from homology"/>
<accession>Q62EZ3</accession>
<dbReference type="EC" id="5.1.1.7" evidence="1"/>
<dbReference type="EMBL" id="CP000010">
    <property type="protein sequence ID" value="AAU48475.1"/>
    <property type="molecule type" value="Genomic_DNA"/>
</dbReference>
<dbReference type="RefSeq" id="WP_004199067.1">
    <property type="nucleotide sequence ID" value="NC_006348.1"/>
</dbReference>
<dbReference type="RefSeq" id="YP_104734.1">
    <property type="nucleotide sequence ID" value="NC_006348.1"/>
</dbReference>
<dbReference type="SMR" id="Q62EZ3"/>
<dbReference type="GeneID" id="93058719"/>
<dbReference type="KEGG" id="bma:BMA3260"/>
<dbReference type="PATRIC" id="fig|243160.12.peg.3342"/>
<dbReference type="eggNOG" id="COG0253">
    <property type="taxonomic scope" value="Bacteria"/>
</dbReference>
<dbReference type="HOGENOM" id="CLU_053306_1_1_4"/>
<dbReference type="UniPathway" id="UPA00034">
    <property type="reaction ID" value="UER00025"/>
</dbReference>
<dbReference type="Proteomes" id="UP000006693">
    <property type="component" value="Chromosome 1"/>
</dbReference>
<dbReference type="GO" id="GO:0005829">
    <property type="term" value="C:cytosol"/>
    <property type="evidence" value="ECO:0007669"/>
    <property type="project" value="TreeGrafter"/>
</dbReference>
<dbReference type="GO" id="GO:0008837">
    <property type="term" value="F:diaminopimelate epimerase activity"/>
    <property type="evidence" value="ECO:0007669"/>
    <property type="project" value="UniProtKB-UniRule"/>
</dbReference>
<dbReference type="GO" id="GO:0009089">
    <property type="term" value="P:lysine biosynthetic process via diaminopimelate"/>
    <property type="evidence" value="ECO:0007669"/>
    <property type="project" value="UniProtKB-UniRule"/>
</dbReference>
<dbReference type="FunFam" id="3.10.310.10:FF:000001">
    <property type="entry name" value="Diaminopimelate epimerase"/>
    <property type="match status" value="1"/>
</dbReference>
<dbReference type="Gene3D" id="3.10.310.10">
    <property type="entry name" value="Diaminopimelate Epimerase, Chain A, domain 1"/>
    <property type="match status" value="2"/>
</dbReference>
<dbReference type="HAMAP" id="MF_00197">
    <property type="entry name" value="DAP_epimerase"/>
    <property type="match status" value="1"/>
</dbReference>
<dbReference type="InterPro" id="IPR018510">
    <property type="entry name" value="DAP_epimerase_AS"/>
</dbReference>
<dbReference type="InterPro" id="IPR001653">
    <property type="entry name" value="DAP_epimerase_DapF"/>
</dbReference>
<dbReference type="NCBIfam" id="TIGR00652">
    <property type="entry name" value="DapF"/>
    <property type="match status" value="1"/>
</dbReference>
<dbReference type="PANTHER" id="PTHR31689:SF0">
    <property type="entry name" value="DIAMINOPIMELATE EPIMERASE"/>
    <property type="match status" value="1"/>
</dbReference>
<dbReference type="PANTHER" id="PTHR31689">
    <property type="entry name" value="DIAMINOPIMELATE EPIMERASE, CHLOROPLASTIC"/>
    <property type="match status" value="1"/>
</dbReference>
<dbReference type="Pfam" id="PF01678">
    <property type="entry name" value="DAP_epimerase"/>
    <property type="match status" value="2"/>
</dbReference>
<dbReference type="SUPFAM" id="SSF54506">
    <property type="entry name" value="Diaminopimelate epimerase-like"/>
    <property type="match status" value="1"/>
</dbReference>
<dbReference type="PROSITE" id="PS01326">
    <property type="entry name" value="DAP_EPIMERASE"/>
    <property type="match status" value="1"/>
</dbReference>
<evidence type="ECO:0000255" key="1">
    <source>
        <dbReference type="HAMAP-Rule" id="MF_00197"/>
    </source>
</evidence>